<gene>
    <name evidence="1" type="primary">pafA</name>
    <name type="ordered locus">Gbro_2465</name>
</gene>
<feature type="chain" id="PRO_0000395917" description="Pup--protein ligase">
    <location>
        <begin position="1"/>
        <end position="452"/>
    </location>
</feature>
<feature type="active site" description="Proton acceptor" evidence="1">
    <location>
        <position position="57"/>
    </location>
</feature>
<feature type="binding site" evidence="1">
    <location>
        <position position="9"/>
    </location>
    <ligand>
        <name>Mg(2+)</name>
        <dbReference type="ChEBI" id="CHEBI:18420"/>
    </ligand>
</feature>
<feature type="binding site" evidence="1">
    <location>
        <position position="53"/>
    </location>
    <ligand>
        <name>ATP</name>
        <dbReference type="ChEBI" id="CHEBI:30616"/>
    </ligand>
</feature>
<feature type="binding site" evidence="1">
    <location>
        <position position="55"/>
    </location>
    <ligand>
        <name>Mg(2+)</name>
        <dbReference type="ChEBI" id="CHEBI:18420"/>
    </ligand>
</feature>
<feature type="binding site" evidence="1">
    <location>
        <position position="63"/>
    </location>
    <ligand>
        <name>Mg(2+)</name>
        <dbReference type="ChEBI" id="CHEBI:18420"/>
    </ligand>
</feature>
<feature type="binding site" evidence="1">
    <location>
        <position position="66"/>
    </location>
    <ligand>
        <name>ATP</name>
        <dbReference type="ChEBI" id="CHEBI:30616"/>
    </ligand>
</feature>
<feature type="binding site" evidence="1">
    <location>
        <position position="419"/>
    </location>
    <ligand>
        <name>ATP</name>
        <dbReference type="ChEBI" id="CHEBI:30616"/>
    </ligand>
</feature>
<comment type="function">
    <text evidence="1">Catalyzes the covalent attachment of the prokaryotic ubiquitin-like protein modifier Pup to the proteasomal substrate proteins, thereby targeting them for proteasomal degradation. This tagging system is termed pupylation. The ligation reaction involves the side-chain carboxylate of the C-terminal glutamate of Pup and the side-chain amino group of a substrate lysine.</text>
</comment>
<comment type="catalytic activity">
    <reaction evidence="1">
        <text>ATP + [prokaryotic ubiquitin-like protein]-L-glutamate + [protein]-L-lysine = ADP + phosphate + N(6)-([prokaryotic ubiquitin-like protein]-gamma-L-glutamyl)-[protein]-L-lysine.</text>
        <dbReference type="EC" id="6.3.1.19"/>
    </reaction>
</comment>
<comment type="pathway">
    <text evidence="1">Protein degradation; proteasomal Pup-dependent pathway.</text>
</comment>
<comment type="pathway">
    <text evidence="1">Protein modification; protein pupylation.</text>
</comment>
<comment type="miscellaneous">
    <text evidence="1">The reaction mechanism probably proceeds via the activation of Pup by phosphorylation of its C-terminal glutamate, which is then subject to nucleophilic attack by the substrate lysine, resulting in an isopeptide bond and the release of phosphate as a good leaving group.</text>
</comment>
<comment type="similarity">
    <text evidence="1">Belongs to the Pup ligase/Pup deamidase family. Pup-conjugating enzyme subfamily.</text>
</comment>
<comment type="sequence caution" evidence="2">
    <conflict type="erroneous initiation">
        <sequence resource="EMBL-CDS" id="ACY21706"/>
    </conflict>
    <text>Truncated N-terminus.</text>
</comment>
<reference key="1">
    <citation type="submission" date="2009-10" db="EMBL/GenBank/DDBJ databases">
        <title>The complete chromosome of Gordonia bronchialis DSM 43247.</title>
        <authorList>
            <consortium name="US DOE Joint Genome Institute (JGI-PGF)"/>
            <person name="Lucas S."/>
            <person name="Copeland A."/>
            <person name="Lapidus A."/>
            <person name="Glavina del Rio T."/>
            <person name="Dalin E."/>
            <person name="Tice H."/>
            <person name="Bruce D."/>
            <person name="Goodwin L."/>
            <person name="Pitluck S."/>
            <person name="Kyrpides N."/>
            <person name="Mavromatis K."/>
            <person name="Ivanova N."/>
            <person name="Ovchinnikova G."/>
            <person name="Saunders E."/>
            <person name="Brettin T."/>
            <person name="Detter J.C."/>
            <person name="Han C."/>
            <person name="Larimer F."/>
            <person name="Land M."/>
            <person name="Hauser L."/>
            <person name="Markowitz V."/>
            <person name="Cheng J.-F."/>
            <person name="Hugenholtz P."/>
            <person name="Woyke T."/>
            <person name="Wu D."/>
            <person name="Jando M."/>
            <person name="Schneider S."/>
            <person name="Goeker M."/>
            <person name="Klenk H.-P."/>
            <person name="Eisen J.A."/>
        </authorList>
    </citation>
    <scope>NUCLEOTIDE SEQUENCE [LARGE SCALE GENOMIC DNA]</scope>
    <source>
        <strain>ATCC 25592 / DSM 43247 / BCRC 13721 / JCM 3198 / KCTC 3076 / NBRC 16047 / NCTC 10667</strain>
    </source>
</reference>
<proteinExistence type="inferred from homology"/>
<sequence>MQRRIMGIETEFGVTCTFHGHRRLSPDEVARYLFRRVVSWGRSSNVFLQNGARLYLDVGSHPEYATAECDSLIQLINHDRAGELVLEDLLVDAEQRLSDEGIGGDIYLFKNNTDSAGNSYGCHENYLVVRAGEFSRISDVLLPFLVTRQLICGAGKVLQTPKAATFCLSQRAEHIWEGVSSATTRSRPIINTRDEPHADAEKYRRLHVIVGDSNMSEMTTLLKVGSAALVLEMIEAGVVFRDFALDNPIRAIREASHDPTGRRPVRLAGGRQASALDIQREYHARAVEHMTNRRPDPEMDMVVDLWGRMLDAVERDDFSKVDTEVDWVIKRKLFQRYQDKYSMELSDPKIAQLDLAFHDIKRGRGVFDVLSRKGLVTRATTDEAIATAVNEPPQTTRAKLRGDFISAAQKAGRDFTVDWVHLKLNDQAQRTVLCKDPFRSVDERVDRLIASM</sequence>
<dbReference type="EC" id="6.3.1.19" evidence="1"/>
<dbReference type="EMBL" id="CP001802">
    <property type="protein sequence ID" value="ACY21706.1"/>
    <property type="status" value="ALT_INIT"/>
    <property type="molecule type" value="Genomic_DNA"/>
</dbReference>
<dbReference type="RefSeq" id="WP_085950367.1">
    <property type="nucleotide sequence ID" value="NC_013441.1"/>
</dbReference>
<dbReference type="SMR" id="D0LDT3"/>
<dbReference type="STRING" id="526226.Gbro_2465"/>
<dbReference type="MEROPS" id="U72.001"/>
<dbReference type="KEGG" id="gbr:Gbro_2465"/>
<dbReference type="eggNOG" id="COG0638">
    <property type="taxonomic scope" value="Bacteria"/>
</dbReference>
<dbReference type="HOGENOM" id="CLU_040524_0_1_11"/>
<dbReference type="OrthoDB" id="9760627at2"/>
<dbReference type="UniPathway" id="UPA00997"/>
<dbReference type="UniPathway" id="UPA00998"/>
<dbReference type="Proteomes" id="UP000001219">
    <property type="component" value="Chromosome"/>
</dbReference>
<dbReference type="GO" id="GO:0005524">
    <property type="term" value="F:ATP binding"/>
    <property type="evidence" value="ECO:0007669"/>
    <property type="project" value="UniProtKB-UniRule"/>
</dbReference>
<dbReference type="GO" id="GO:0016879">
    <property type="term" value="F:ligase activity, forming carbon-nitrogen bonds"/>
    <property type="evidence" value="ECO:0007669"/>
    <property type="project" value="InterPro"/>
</dbReference>
<dbReference type="GO" id="GO:0000287">
    <property type="term" value="F:magnesium ion binding"/>
    <property type="evidence" value="ECO:0007669"/>
    <property type="project" value="UniProtKB-UniRule"/>
</dbReference>
<dbReference type="GO" id="GO:0019787">
    <property type="term" value="F:ubiquitin-like protein transferase activity"/>
    <property type="evidence" value="ECO:0007669"/>
    <property type="project" value="UniProtKB-UniRule"/>
</dbReference>
<dbReference type="GO" id="GO:0019941">
    <property type="term" value="P:modification-dependent protein catabolic process"/>
    <property type="evidence" value="ECO:0007669"/>
    <property type="project" value="UniProtKB-UniRule"/>
</dbReference>
<dbReference type="GO" id="GO:0010498">
    <property type="term" value="P:proteasomal protein catabolic process"/>
    <property type="evidence" value="ECO:0007669"/>
    <property type="project" value="UniProtKB-UniRule"/>
</dbReference>
<dbReference type="GO" id="GO:0070490">
    <property type="term" value="P:protein pupylation"/>
    <property type="evidence" value="ECO:0007669"/>
    <property type="project" value="UniProtKB-UniRule"/>
</dbReference>
<dbReference type="HAMAP" id="MF_02111">
    <property type="entry name" value="Pup_ligase"/>
    <property type="match status" value="1"/>
</dbReference>
<dbReference type="InterPro" id="IPR022279">
    <property type="entry name" value="Pup_ligase"/>
</dbReference>
<dbReference type="InterPro" id="IPR004347">
    <property type="entry name" value="Pup_ligase/deamidase"/>
</dbReference>
<dbReference type="NCBIfam" id="TIGR03686">
    <property type="entry name" value="pupylate_PafA"/>
    <property type="match status" value="1"/>
</dbReference>
<dbReference type="PANTHER" id="PTHR42307">
    <property type="entry name" value="PUP DEAMIDASE/DEPUPYLASE"/>
    <property type="match status" value="1"/>
</dbReference>
<dbReference type="PANTHER" id="PTHR42307:SF3">
    <property type="entry name" value="PUP--PROTEIN LIGASE"/>
    <property type="match status" value="1"/>
</dbReference>
<dbReference type="Pfam" id="PF03136">
    <property type="entry name" value="Pup_ligase"/>
    <property type="match status" value="1"/>
</dbReference>
<dbReference type="PIRSF" id="PIRSF018077">
    <property type="entry name" value="UCP018077"/>
    <property type="match status" value="1"/>
</dbReference>
<protein>
    <recommendedName>
        <fullName evidence="1">Pup--protein ligase</fullName>
        <ecNumber evidence="1">6.3.1.19</ecNumber>
    </recommendedName>
    <alternativeName>
        <fullName evidence="1">Proteasome accessory factor A</fullName>
    </alternativeName>
    <alternativeName>
        <fullName evidence="1">Pup-conjugating enzyme</fullName>
    </alternativeName>
</protein>
<name>PAFA_GORB4</name>
<keyword id="KW-0067">ATP-binding</keyword>
<keyword id="KW-0436">Ligase</keyword>
<keyword id="KW-0460">Magnesium</keyword>
<keyword id="KW-0479">Metal-binding</keyword>
<keyword id="KW-0547">Nucleotide-binding</keyword>
<keyword id="KW-1185">Reference proteome</keyword>
<keyword id="KW-0833">Ubl conjugation pathway</keyword>
<accession>D0LDT3</accession>
<organism>
    <name type="scientific">Gordonia bronchialis (strain ATCC 25592 / DSM 43247 / BCRC 13721 / JCM 3198 / KCTC 3076 / NBRC 16047 / NCTC 10667)</name>
    <name type="common">Rhodococcus bronchialis</name>
    <dbReference type="NCBI Taxonomy" id="526226"/>
    <lineage>
        <taxon>Bacteria</taxon>
        <taxon>Bacillati</taxon>
        <taxon>Actinomycetota</taxon>
        <taxon>Actinomycetes</taxon>
        <taxon>Mycobacteriales</taxon>
        <taxon>Gordoniaceae</taxon>
        <taxon>Gordonia</taxon>
    </lineage>
</organism>
<evidence type="ECO:0000255" key="1">
    <source>
        <dbReference type="HAMAP-Rule" id="MF_02111"/>
    </source>
</evidence>
<evidence type="ECO:0000305" key="2"/>